<evidence type="ECO:0000256" key="1">
    <source>
        <dbReference type="SAM" id="MobiDB-lite"/>
    </source>
</evidence>
<evidence type="ECO:0000305" key="2"/>
<proteinExistence type="uncertain"/>
<accession>Q95K60</accession>
<gene>
    <name type="ORF">QmoA-11640</name>
</gene>
<feature type="chain" id="PRO_0000340232" description="Putative uncharacterized protein FBXL19-AS1 homolog">
    <location>
        <begin position="1"/>
        <end position="122"/>
    </location>
</feature>
<feature type="region of interest" description="Disordered" evidence="1">
    <location>
        <begin position="1"/>
        <end position="26"/>
    </location>
</feature>
<feature type="compositionally biased region" description="Basic and acidic residues" evidence="1">
    <location>
        <begin position="1"/>
        <end position="15"/>
    </location>
</feature>
<name>FBAS1_MACFA</name>
<reference key="1">
    <citation type="journal article" date="2002" name="Genome Biol.">
        <title>Prediction of unidentified human genes on the basis of sequence similarity to novel cDNAs from cynomolgus monkey brain.</title>
        <authorList>
            <person name="Osada N."/>
            <person name="Hida M."/>
            <person name="Kusuda J."/>
            <person name="Tanuma R."/>
            <person name="Hirata M."/>
            <person name="Hirai M."/>
            <person name="Terao K."/>
            <person name="Suzuki Y."/>
            <person name="Sugano S."/>
            <person name="Hashimoto K."/>
        </authorList>
    </citation>
    <scope>NUCLEOTIDE SEQUENCE [LARGE SCALE MRNA]</scope>
    <source>
        <tissue>Medulla oblongata</tissue>
    </source>
</reference>
<protein>
    <recommendedName>
        <fullName>Putative uncharacterized protein FBXL19-AS1 homolog</fullName>
    </recommendedName>
    <alternativeName>
        <fullName>FBXL19 antisense RNA 1</fullName>
    </alternativeName>
    <alternativeName>
        <fullName>FBXL19 antisense gene protein 1</fullName>
    </alternativeName>
</protein>
<dbReference type="EMBL" id="AB066529">
    <property type="protein sequence ID" value="BAB62207.1"/>
    <property type="molecule type" value="mRNA"/>
</dbReference>
<dbReference type="Proteomes" id="UP000233100">
    <property type="component" value="Unplaced"/>
</dbReference>
<sequence>MAEPGGRGDYHKDGRPPSLSRSPLFTTLGTSPACGLEIPPTSGARPDGSCSLPAHVYHLQSRQWKGMGRGHRQRWRLQGWGDGDTGCVVQAPSLFPAEIRERTTVKMATLPLDLCAGACWEM</sequence>
<organism>
    <name type="scientific">Macaca fascicularis</name>
    <name type="common">Crab-eating macaque</name>
    <name type="synonym">Cynomolgus monkey</name>
    <dbReference type="NCBI Taxonomy" id="9541"/>
    <lineage>
        <taxon>Eukaryota</taxon>
        <taxon>Metazoa</taxon>
        <taxon>Chordata</taxon>
        <taxon>Craniata</taxon>
        <taxon>Vertebrata</taxon>
        <taxon>Euteleostomi</taxon>
        <taxon>Mammalia</taxon>
        <taxon>Eutheria</taxon>
        <taxon>Euarchontoglires</taxon>
        <taxon>Primates</taxon>
        <taxon>Haplorrhini</taxon>
        <taxon>Catarrhini</taxon>
        <taxon>Cercopithecidae</taxon>
        <taxon>Cercopithecinae</taxon>
        <taxon>Macaca</taxon>
    </lineage>
</organism>
<keyword id="KW-1185">Reference proteome</keyword>
<comment type="caution">
    <text evidence="2">Product of a dubious CDS prediction. Probable non-coding RNA.</text>
</comment>